<gene>
    <name evidence="1" type="primary">hisB</name>
    <name type="ordered locus">GTNG_3024</name>
</gene>
<organism>
    <name type="scientific">Geobacillus thermodenitrificans (strain NG80-2)</name>
    <dbReference type="NCBI Taxonomy" id="420246"/>
    <lineage>
        <taxon>Bacteria</taxon>
        <taxon>Bacillati</taxon>
        <taxon>Bacillota</taxon>
        <taxon>Bacilli</taxon>
        <taxon>Bacillales</taxon>
        <taxon>Anoxybacillaceae</taxon>
        <taxon>Geobacillus</taxon>
    </lineage>
</organism>
<protein>
    <recommendedName>
        <fullName evidence="1">Imidazoleglycerol-phosphate dehydratase</fullName>
        <shortName evidence="1">IGPD</shortName>
        <ecNumber evidence="1">4.2.1.19</ecNumber>
    </recommendedName>
</protein>
<reference key="1">
    <citation type="journal article" date="2007" name="Proc. Natl. Acad. Sci. U.S.A.">
        <title>Genome and proteome of long-chain alkane degrading Geobacillus thermodenitrificans NG80-2 isolated from a deep-subsurface oil reservoir.</title>
        <authorList>
            <person name="Feng L."/>
            <person name="Wang W."/>
            <person name="Cheng J."/>
            <person name="Ren Y."/>
            <person name="Zhao G."/>
            <person name="Gao C."/>
            <person name="Tang Y."/>
            <person name="Liu X."/>
            <person name="Han W."/>
            <person name="Peng X."/>
            <person name="Liu R."/>
            <person name="Wang L."/>
        </authorList>
    </citation>
    <scope>NUCLEOTIDE SEQUENCE [LARGE SCALE GENOMIC DNA]</scope>
    <source>
        <strain>NG80-2</strain>
    </source>
</reference>
<keyword id="KW-0028">Amino-acid biosynthesis</keyword>
<keyword id="KW-0963">Cytoplasm</keyword>
<keyword id="KW-0368">Histidine biosynthesis</keyword>
<keyword id="KW-0456">Lyase</keyword>
<proteinExistence type="inferred from homology"/>
<accession>A4ISR5</accession>
<dbReference type="EC" id="4.2.1.19" evidence="1"/>
<dbReference type="EMBL" id="CP000557">
    <property type="protein sequence ID" value="ABO68369.1"/>
    <property type="molecule type" value="Genomic_DNA"/>
</dbReference>
<dbReference type="RefSeq" id="WP_008880308.1">
    <property type="nucleotide sequence ID" value="NC_009328.1"/>
</dbReference>
<dbReference type="SMR" id="A4ISR5"/>
<dbReference type="GeneID" id="87622827"/>
<dbReference type="KEGG" id="gtn:GTNG_3024"/>
<dbReference type="eggNOG" id="COG0131">
    <property type="taxonomic scope" value="Bacteria"/>
</dbReference>
<dbReference type="HOGENOM" id="CLU_044308_2_0_9"/>
<dbReference type="UniPathway" id="UPA00031">
    <property type="reaction ID" value="UER00011"/>
</dbReference>
<dbReference type="Proteomes" id="UP000001578">
    <property type="component" value="Chromosome"/>
</dbReference>
<dbReference type="GO" id="GO:0005737">
    <property type="term" value="C:cytoplasm"/>
    <property type="evidence" value="ECO:0007669"/>
    <property type="project" value="UniProtKB-SubCell"/>
</dbReference>
<dbReference type="GO" id="GO:0004424">
    <property type="term" value="F:imidazoleglycerol-phosphate dehydratase activity"/>
    <property type="evidence" value="ECO:0007669"/>
    <property type="project" value="UniProtKB-UniRule"/>
</dbReference>
<dbReference type="GO" id="GO:0000105">
    <property type="term" value="P:L-histidine biosynthetic process"/>
    <property type="evidence" value="ECO:0007669"/>
    <property type="project" value="UniProtKB-UniRule"/>
</dbReference>
<dbReference type="CDD" id="cd07914">
    <property type="entry name" value="IGPD"/>
    <property type="match status" value="1"/>
</dbReference>
<dbReference type="FunFam" id="3.30.230.40:FF:000001">
    <property type="entry name" value="Imidazoleglycerol-phosphate dehydratase HisB"/>
    <property type="match status" value="1"/>
</dbReference>
<dbReference type="FunFam" id="3.30.230.40:FF:000003">
    <property type="entry name" value="Imidazoleglycerol-phosphate dehydratase HisB"/>
    <property type="match status" value="1"/>
</dbReference>
<dbReference type="Gene3D" id="3.30.230.40">
    <property type="entry name" value="Imidazole glycerol phosphate dehydratase, domain 1"/>
    <property type="match status" value="2"/>
</dbReference>
<dbReference type="HAMAP" id="MF_00076">
    <property type="entry name" value="HisB"/>
    <property type="match status" value="1"/>
</dbReference>
<dbReference type="InterPro" id="IPR038494">
    <property type="entry name" value="IGPD_sf"/>
</dbReference>
<dbReference type="InterPro" id="IPR000807">
    <property type="entry name" value="ImidazoleglycerolP_deHydtase"/>
</dbReference>
<dbReference type="InterPro" id="IPR020565">
    <property type="entry name" value="ImidazoleglycerP_deHydtase_CS"/>
</dbReference>
<dbReference type="InterPro" id="IPR020568">
    <property type="entry name" value="Ribosomal_Su5_D2-typ_SF"/>
</dbReference>
<dbReference type="NCBIfam" id="NF002111">
    <property type="entry name" value="PRK00951.2-1"/>
    <property type="match status" value="1"/>
</dbReference>
<dbReference type="NCBIfam" id="NF002114">
    <property type="entry name" value="PRK00951.2-4"/>
    <property type="match status" value="1"/>
</dbReference>
<dbReference type="NCBIfam" id="NF002115">
    <property type="entry name" value="PRK00951.2-5"/>
    <property type="match status" value="1"/>
</dbReference>
<dbReference type="NCBIfam" id="NF002116">
    <property type="entry name" value="PRK00951.2-6"/>
    <property type="match status" value="1"/>
</dbReference>
<dbReference type="PANTHER" id="PTHR23133:SF2">
    <property type="entry name" value="IMIDAZOLEGLYCEROL-PHOSPHATE DEHYDRATASE"/>
    <property type="match status" value="1"/>
</dbReference>
<dbReference type="PANTHER" id="PTHR23133">
    <property type="entry name" value="IMIDAZOLEGLYCEROL-PHOSPHATE DEHYDRATASE HIS7"/>
    <property type="match status" value="1"/>
</dbReference>
<dbReference type="Pfam" id="PF00475">
    <property type="entry name" value="IGPD"/>
    <property type="match status" value="1"/>
</dbReference>
<dbReference type="SUPFAM" id="SSF54211">
    <property type="entry name" value="Ribosomal protein S5 domain 2-like"/>
    <property type="match status" value="2"/>
</dbReference>
<dbReference type="PROSITE" id="PS00954">
    <property type="entry name" value="IGP_DEHYDRATASE_1"/>
    <property type="match status" value="1"/>
</dbReference>
<dbReference type="PROSITE" id="PS00955">
    <property type="entry name" value="IGP_DEHYDRATASE_2"/>
    <property type="match status" value="1"/>
</dbReference>
<sequence>MAREATIARTTNETSIQLSFSLDGEGKAELETGVPFLTHMLDLFAKHGQFDLRVDAKGDTHIDDHHTTEDIGICLGQAIKEALGDKKGIKRYGNAFVPMDDALAQVVIDLSNRPHFEFRGEFPAAKVGTFDVELVYEFLWKLALEARMNLHVIVHYGRNTHHMIEAVFKALGRALDEATMVDPRVKGVPSTKGML</sequence>
<comment type="catalytic activity">
    <reaction evidence="1">
        <text>D-erythro-1-(imidazol-4-yl)glycerol 3-phosphate = 3-(imidazol-4-yl)-2-oxopropyl phosphate + H2O</text>
        <dbReference type="Rhea" id="RHEA:11040"/>
        <dbReference type="ChEBI" id="CHEBI:15377"/>
        <dbReference type="ChEBI" id="CHEBI:57766"/>
        <dbReference type="ChEBI" id="CHEBI:58278"/>
        <dbReference type="EC" id="4.2.1.19"/>
    </reaction>
</comment>
<comment type="pathway">
    <text evidence="1">Amino-acid biosynthesis; L-histidine biosynthesis; L-histidine from 5-phospho-alpha-D-ribose 1-diphosphate: step 6/9.</text>
</comment>
<comment type="subcellular location">
    <subcellularLocation>
        <location evidence="1">Cytoplasm</location>
    </subcellularLocation>
</comment>
<comment type="similarity">
    <text evidence="1">Belongs to the imidazoleglycerol-phosphate dehydratase family.</text>
</comment>
<name>HIS7_GEOTN</name>
<evidence type="ECO:0000255" key="1">
    <source>
        <dbReference type="HAMAP-Rule" id="MF_00076"/>
    </source>
</evidence>
<feature type="chain" id="PRO_1000010281" description="Imidazoleglycerol-phosphate dehydratase">
    <location>
        <begin position="1"/>
        <end position="195"/>
    </location>
</feature>